<proteinExistence type="evidence at transcript level"/>
<reference key="1">
    <citation type="submission" date="2005-06" db="EMBL/GenBank/DDBJ databases">
        <authorList>
            <consortium name="NIH - Xenopus Gene Collection (XGC) project"/>
        </authorList>
    </citation>
    <scope>NUCLEOTIDE SEQUENCE [LARGE SCALE MRNA]</scope>
    <source>
        <tissue>Embryo</tissue>
    </source>
</reference>
<protein>
    <recommendedName>
        <fullName>Protein LTV1 homolog</fullName>
    </recommendedName>
</protein>
<organism>
    <name type="scientific">Xenopus laevis</name>
    <name type="common">African clawed frog</name>
    <dbReference type="NCBI Taxonomy" id="8355"/>
    <lineage>
        <taxon>Eukaryota</taxon>
        <taxon>Metazoa</taxon>
        <taxon>Chordata</taxon>
        <taxon>Craniata</taxon>
        <taxon>Vertebrata</taxon>
        <taxon>Euteleostomi</taxon>
        <taxon>Amphibia</taxon>
        <taxon>Batrachia</taxon>
        <taxon>Anura</taxon>
        <taxon>Pipoidea</taxon>
        <taxon>Pipidae</taxon>
        <taxon>Xenopodinae</taxon>
        <taxon>Xenopus</taxon>
        <taxon>Xenopus</taxon>
    </lineage>
</organism>
<sequence>MPHRKKKPFIENKKAVTFHLVHRSQRDPLAADETAPQRVLLPADKADTEKRKEEQRDFGVFFDDDYNYLQHLKERGPSELIPSATSKSKSCIITDQDGDKEKEPQHVPGPSINLPSSVFASEFEEDVGLLNKAAPVRGLCLDLDPDIVAALDEDFDFDDPENQLDDDFILQANSDDLRRSSHEKDDDDDDWEDVESGSEENDYDSDGTVSDEDDGEGDGARKEFLFMQEETKSRFTEYSMTSSVIRRNEQLTLLDERFEKFYEQFDDDEIGALDNTELEGFIDSNSGRLEEVINDYYKQKAKDCVKLKNLTPRDGMDSVTEEDDEDKEDMQTIVIEEPREKWDCESILSTYSNLYNHPQIIKDPPKAKLIRVSVKTGIPMDVLPGRGLTAKQVERMEMINSSDIPRVSTHPRKDESKEERKARKQAIKEERKERRVEKKSNKLAFKEEKSRQVKEQLNLKQNLQGLKLS</sequence>
<gene>
    <name type="primary">ltv1</name>
</gene>
<feature type="chain" id="PRO_0000302818" description="Protein LTV1 homolog">
    <location>
        <begin position="1"/>
        <end position="469"/>
    </location>
</feature>
<feature type="region of interest" description="Disordered" evidence="3">
    <location>
        <begin position="24"/>
        <end position="53"/>
    </location>
</feature>
<feature type="region of interest" description="Disordered" evidence="3">
    <location>
        <begin position="77"/>
        <end position="113"/>
    </location>
</feature>
<feature type="region of interest" description="Disordered" evidence="3">
    <location>
        <begin position="175"/>
        <end position="220"/>
    </location>
</feature>
<feature type="region of interest" description="Disordered" evidence="3">
    <location>
        <begin position="399"/>
        <end position="453"/>
    </location>
</feature>
<feature type="coiled-coil region" evidence="2">
    <location>
        <begin position="412"/>
        <end position="467"/>
    </location>
</feature>
<feature type="compositionally biased region" description="Basic and acidic residues" evidence="3">
    <location>
        <begin position="44"/>
        <end position="53"/>
    </location>
</feature>
<feature type="compositionally biased region" description="Polar residues" evidence="3">
    <location>
        <begin position="83"/>
        <end position="93"/>
    </location>
</feature>
<feature type="compositionally biased region" description="Basic and acidic residues" evidence="3">
    <location>
        <begin position="175"/>
        <end position="184"/>
    </location>
</feature>
<feature type="compositionally biased region" description="Acidic residues" evidence="3">
    <location>
        <begin position="185"/>
        <end position="217"/>
    </location>
</feature>
<feature type="compositionally biased region" description="Basic and acidic residues" evidence="3">
    <location>
        <begin position="411"/>
        <end position="453"/>
    </location>
</feature>
<comment type="function">
    <text evidence="1">Essential for ribosome biogenesis.</text>
</comment>
<comment type="similarity">
    <text evidence="4">Belongs to the LTV1 family.</text>
</comment>
<comment type="sequence caution" evidence="4">
    <conflict type="miscellaneous discrepancy">
        <sequence resource="EMBL-CDS" id="AAH73209"/>
    </conflict>
    <text>Contaminating sequence. Potential poly-A sequence.</text>
</comment>
<name>LTV1_XENLA</name>
<dbReference type="EMBL" id="BC073209">
    <property type="protein sequence ID" value="AAH73209.1"/>
    <property type="status" value="ALT_SEQ"/>
    <property type="molecule type" value="mRNA"/>
</dbReference>
<dbReference type="EMBL" id="BC097559">
    <property type="protein sequence ID" value="AAH97559.1"/>
    <property type="molecule type" value="mRNA"/>
</dbReference>
<dbReference type="RefSeq" id="NP_001085284.1">
    <property type="nucleotide sequence ID" value="NM_001091815.1"/>
</dbReference>
<dbReference type="RefSeq" id="XP_018117343.1">
    <property type="nucleotide sequence ID" value="XM_018261854.1"/>
</dbReference>
<dbReference type="SMR" id="Q4V838"/>
<dbReference type="BioGRID" id="101795">
    <property type="interactions" value="1"/>
</dbReference>
<dbReference type="IntAct" id="Q4V838">
    <property type="interactions" value="1"/>
</dbReference>
<dbReference type="DNASU" id="443630"/>
<dbReference type="GeneID" id="443630"/>
<dbReference type="KEGG" id="xla:443630"/>
<dbReference type="AGR" id="Xenbase:XB-GENE-1005073"/>
<dbReference type="CTD" id="443630"/>
<dbReference type="Xenbase" id="XB-GENE-1005073">
    <property type="gene designation" value="ltv1.L"/>
</dbReference>
<dbReference type="OMA" id="TKEFLFM"/>
<dbReference type="OrthoDB" id="5852896at2759"/>
<dbReference type="Proteomes" id="UP000186698">
    <property type="component" value="Chromosome 5L"/>
</dbReference>
<dbReference type="Bgee" id="443630">
    <property type="expression patterns" value="Expressed in pancreas and 19 other cell types or tissues"/>
</dbReference>
<dbReference type="GO" id="GO:0005829">
    <property type="term" value="C:cytosol"/>
    <property type="evidence" value="ECO:0000318"/>
    <property type="project" value="GO_Central"/>
</dbReference>
<dbReference type="GO" id="GO:0005634">
    <property type="term" value="C:nucleus"/>
    <property type="evidence" value="ECO:0000318"/>
    <property type="project" value="GO_Central"/>
</dbReference>
<dbReference type="GO" id="GO:0030688">
    <property type="term" value="C:preribosome, small subunit precursor"/>
    <property type="evidence" value="ECO:0000318"/>
    <property type="project" value="GO_Central"/>
</dbReference>
<dbReference type="GO" id="GO:0042274">
    <property type="term" value="P:ribosomal small subunit biogenesis"/>
    <property type="evidence" value="ECO:0000318"/>
    <property type="project" value="GO_Central"/>
</dbReference>
<dbReference type="GO" id="GO:0000056">
    <property type="term" value="P:ribosomal small subunit export from nucleus"/>
    <property type="evidence" value="ECO:0000318"/>
    <property type="project" value="GO_Central"/>
</dbReference>
<dbReference type="GO" id="GO:0042254">
    <property type="term" value="P:ribosome biogenesis"/>
    <property type="evidence" value="ECO:0000250"/>
    <property type="project" value="UniProtKB"/>
</dbReference>
<dbReference type="InterPro" id="IPR007307">
    <property type="entry name" value="Ltv1"/>
</dbReference>
<dbReference type="PANTHER" id="PTHR21531">
    <property type="entry name" value="LOW-TEMPERATURE VIABILITY PROTEIN LTV1-RELATED"/>
    <property type="match status" value="1"/>
</dbReference>
<dbReference type="PANTHER" id="PTHR21531:SF0">
    <property type="entry name" value="PROTEIN LTV1 HOMOLOG"/>
    <property type="match status" value="1"/>
</dbReference>
<dbReference type="Pfam" id="PF04180">
    <property type="entry name" value="LTV"/>
    <property type="match status" value="2"/>
</dbReference>
<evidence type="ECO:0000250" key="1">
    <source>
        <dbReference type="UniProtKB" id="Q5U3J8"/>
    </source>
</evidence>
<evidence type="ECO:0000255" key="2"/>
<evidence type="ECO:0000256" key="3">
    <source>
        <dbReference type="SAM" id="MobiDB-lite"/>
    </source>
</evidence>
<evidence type="ECO:0000305" key="4"/>
<keyword id="KW-0175">Coiled coil</keyword>
<keyword id="KW-1185">Reference proteome</keyword>
<keyword id="KW-0690">Ribosome biogenesis</keyword>
<accession>Q4V838</accession>
<accession>Q6GPD2</accession>